<feature type="chain" id="PRO_0000323614" description="DNA-directed RNA polymerase subunit alpha">
    <location>
        <begin position="1"/>
        <end position="317"/>
    </location>
</feature>
<feature type="region of interest" description="Alpha N-terminal domain (alpha-NTD)" evidence="1">
    <location>
        <begin position="1"/>
        <end position="230"/>
    </location>
</feature>
<feature type="region of interest" description="Alpha C-terminal domain (alpha-CTD)" evidence="1">
    <location>
        <begin position="247"/>
        <end position="317"/>
    </location>
</feature>
<reference key="1">
    <citation type="submission" date="2007-10" db="EMBL/GenBank/DDBJ databases">
        <title>Complete genome of Alkaliphilus oremlandii OhILAs.</title>
        <authorList>
            <person name="Copeland A."/>
            <person name="Lucas S."/>
            <person name="Lapidus A."/>
            <person name="Barry K."/>
            <person name="Detter J.C."/>
            <person name="Glavina del Rio T."/>
            <person name="Hammon N."/>
            <person name="Israni S."/>
            <person name="Dalin E."/>
            <person name="Tice H."/>
            <person name="Pitluck S."/>
            <person name="Chain P."/>
            <person name="Malfatti S."/>
            <person name="Shin M."/>
            <person name="Vergez L."/>
            <person name="Schmutz J."/>
            <person name="Larimer F."/>
            <person name="Land M."/>
            <person name="Hauser L."/>
            <person name="Kyrpides N."/>
            <person name="Mikhailova N."/>
            <person name="Stolz J.F."/>
            <person name="Dawson A."/>
            <person name="Fisher E."/>
            <person name="Crable B."/>
            <person name="Perera E."/>
            <person name="Lisak J."/>
            <person name="Ranganathan M."/>
            <person name="Basu P."/>
            <person name="Richardson P."/>
        </authorList>
    </citation>
    <scope>NUCLEOTIDE SEQUENCE [LARGE SCALE GENOMIC DNA]</scope>
    <source>
        <strain>OhILAs</strain>
    </source>
</reference>
<dbReference type="EC" id="2.7.7.6" evidence="1"/>
<dbReference type="EMBL" id="CP000853">
    <property type="protein sequence ID" value="ABW18083.1"/>
    <property type="molecule type" value="Genomic_DNA"/>
</dbReference>
<dbReference type="RefSeq" id="WP_012158397.1">
    <property type="nucleotide sequence ID" value="NC_009922.1"/>
</dbReference>
<dbReference type="SMR" id="A8MLG9"/>
<dbReference type="STRING" id="350688.Clos_0521"/>
<dbReference type="KEGG" id="aoe:Clos_0521"/>
<dbReference type="eggNOG" id="COG0202">
    <property type="taxonomic scope" value="Bacteria"/>
</dbReference>
<dbReference type="HOGENOM" id="CLU_053084_0_1_9"/>
<dbReference type="OrthoDB" id="9805706at2"/>
<dbReference type="Proteomes" id="UP000000269">
    <property type="component" value="Chromosome"/>
</dbReference>
<dbReference type="GO" id="GO:0005737">
    <property type="term" value="C:cytoplasm"/>
    <property type="evidence" value="ECO:0007669"/>
    <property type="project" value="UniProtKB-ARBA"/>
</dbReference>
<dbReference type="GO" id="GO:0000428">
    <property type="term" value="C:DNA-directed RNA polymerase complex"/>
    <property type="evidence" value="ECO:0007669"/>
    <property type="project" value="UniProtKB-KW"/>
</dbReference>
<dbReference type="GO" id="GO:0003677">
    <property type="term" value="F:DNA binding"/>
    <property type="evidence" value="ECO:0007669"/>
    <property type="project" value="UniProtKB-UniRule"/>
</dbReference>
<dbReference type="GO" id="GO:0003899">
    <property type="term" value="F:DNA-directed RNA polymerase activity"/>
    <property type="evidence" value="ECO:0007669"/>
    <property type="project" value="UniProtKB-UniRule"/>
</dbReference>
<dbReference type="GO" id="GO:0046983">
    <property type="term" value="F:protein dimerization activity"/>
    <property type="evidence" value="ECO:0007669"/>
    <property type="project" value="InterPro"/>
</dbReference>
<dbReference type="GO" id="GO:0006351">
    <property type="term" value="P:DNA-templated transcription"/>
    <property type="evidence" value="ECO:0007669"/>
    <property type="project" value="UniProtKB-UniRule"/>
</dbReference>
<dbReference type="CDD" id="cd06928">
    <property type="entry name" value="RNAP_alpha_NTD"/>
    <property type="match status" value="1"/>
</dbReference>
<dbReference type="FunFam" id="1.10.150.20:FF:000001">
    <property type="entry name" value="DNA-directed RNA polymerase subunit alpha"/>
    <property type="match status" value="1"/>
</dbReference>
<dbReference type="FunFam" id="2.170.120.12:FF:000001">
    <property type="entry name" value="DNA-directed RNA polymerase subunit alpha"/>
    <property type="match status" value="1"/>
</dbReference>
<dbReference type="Gene3D" id="1.10.150.20">
    <property type="entry name" value="5' to 3' exonuclease, C-terminal subdomain"/>
    <property type="match status" value="1"/>
</dbReference>
<dbReference type="Gene3D" id="2.170.120.12">
    <property type="entry name" value="DNA-directed RNA polymerase, insert domain"/>
    <property type="match status" value="1"/>
</dbReference>
<dbReference type="Gene3D" id="3.30.1360.10">
    <property type="entry name" value="RNA polymerase, RBP11-like subunit"/>
    <property type="match status" value="1"/>
</dbReference>
<dbReference type="HAMAP" id="MF_00059">
    <property type="entry name" value="RNApol_bact_RpoA"/>
    <property type="match status" value="1"/>
</dbReference>
<dbReference type="InterPro" id="IPR011262">
    <property type="entry name" value="DNA-dir_RNA_pol_insert"/>
</dbReference>
<dbReference type="InterPro" id="IPR011263">
    <property type="entry name" value="DNA-dir_RNA_pol_RpoA/D/Rpb3"/>
</dbReference>
<dbReference type="InterPro" id="IPR011773">
    <property type="entry name" value="DNA-dir_RpoA"/>
</dbReference>
<dbReference type="InterPro" id="IPR036603">
    <property type="entry name" value="RBP11-like"/>
</dbReference>
<dbReference type="InterPro" id="IPR011260">
    <property type="entry name" value="RNAP_asu_C"/>
</dbReference>
<dbReference type="InterPro" id="IPR036643">
    <property type="entry name" value="RNApol_insert_sf"/>
</dbReference>
<dbReference type="NCBIfam" id="NF003513">
    <property type="entry name" value="PRK05182.1-2"/>
    <property type="match status" value="1"/>
</dbReference>
<dbReference type="NCBIfam" id="NF003515">
    <property type="entry name" value="PRK05182.2-1"/>
    <property type="match status" value="1"/>
</dbReference>
<dbReference type="NCBIfam" id="NF003516">
    <property type="entry name" value="PRK05182.2-2"/>
    <property type="match status" value="1"/>
</dbReference>
<dbReference type="NCBIfam" id="NF003519">
    <property type="entry name" value="PRK05182.2-5"/>
    <property type="match status" value="1"/>
</dbReference>
<dbReference type="NCBIfam" id="TIGR02027">
    <property type="entry name" value="rpoA"/>
    <property type="match status" value="1"/>
</dbReference>
<dbReference type="Pfam" id="PF01000">
    <property type="entry name" value="RNA_pol_A_bac"/>
    <property type="match status" value="1"/>
</dbReference>
<dbReference type="Pfam" id="PF03118">
    <property type="entry name" value="RNA_pol_A_CTD"/>
    <property type="match status" value="1"/>
</dbReference>
<dbReference type="Pfam" id="PF01193">
    <property type="entry name" value="RNA_pol_L"/>
    <property type="match status" value="1"/>
</dbReference>
<dbReference type="SMART" id="SM00662">
    <property type="entry name" value="RPOLD"/>
    <property type="match status" value="1"/>
</dbReference>
<dbReference type="SUPFAM" id="SSF47789">
    <property type="entry name" value="C-terminal domain of RNA polymerase alpha subunit"/>
    <property type="match status" value="1"/>
</dbReference>
<dbReference type="SUPFAM" id="SSF56553">
    <property type="entry name" value="Insert subdomain of RNA polymerase alpha subunit"/>
    <property type="match status" value="1"/>
</dbReference>
<dbReference type="SUPFAM" id="SSF55257">
    <property type="entry name" value="RBP11-like subunits of RNA polymerase"/>
    <property type="match status" value="1"/>
</dbReference>
<protein>
    <recommendedName>
        <fullName evidence="1">DNA-directed RNA polymerase subunit alpha</fullName>
        <shortName evidence="1">RNAP subunit alpha</shortName>
        <ecNumber evidence="1">2.7.7.6</ecNumber>
    </recommendedName>
    <alternativeName>
        <fullName evidence="1">RNA polymerase subunit alpha</fullName>
    </alternativeName>
    <alternativeName>
        <fullName evidence="1">Transcriptase subunit alpha</fullName>
    </alternativeName>
</protein>
<sequence>MIEIEMEKPKVEVVEINAENTYGKFTVEPLERGYGTTLGNSLRRIMLSSLPGAAVTSVKIDGVLHEFSTIPGVKEDVAEIIINLKGLSIRMHGNEPKTVRIEAKGEGVITAGDIIADADVEILSPDTHIATLDTDAVLNMELTIAKGRGYVPAENNKTPGMPIGVLPIDSIFTPVTKVSYHVENTRVGQVTDYDKLVIEVFTDGSIVPDEAISLAAKIMNEHLNLFITLTDHVNDVEIMVQKEEDKKEKVLEMTIEELDLSVRSYNCLKRAGINTVDELAQKSEEDMMKVRNLGRKSLEEVQKKLEELGLGLRPSDE</sequence>
<proteinExistence type="inferred from homology"/>
<evidence type="ECO:0000255" key="1">
    <source>
        <dbReference type="HAMAP-Rule" id="MF_00059"/>
    </source>
</evidence>
<organism>
    <name type="scientific">Alkaliphilus oremlandii (strain OhILAs)</name>
    <name type="common">Clostridium oremlandii (strain OhILAs)</name>
    <dbReference type="NCBI Taxonomy" id="350688"/>
    <lineage>
        <taxon>Bacteria</taxon>
        <taxon>Bacillati</taxon>
        <taxon>Bacillota</taxon>
        <taxon>Clostridia</taxon>
        <taxon>Peptostreptococcales</taxon>
        <taxon>Natronincolaceae</taxon>
        <taxon>Alkaliphilus</taxon>
    </lineage>
</organism>
<accession>A8MLG9</accession>
<keyword id="KW-0240">DNA-directed RNA polymerase</keyword>
<keyword id="KW-0548">Nucleotidyltransferase</keyword>
<keyword id="KW-1185">Reference proteome</keyword>
<keyword id="KW-0804">Transcription</keyword>
<keyword id="KW-0808">Transferase</keyword>
<gene>
    <name evidence="1" type="primary">rpoA</name>
    <name type="ordered locus">Clos_0521</name>
</gene>
<comment type="function">
    <text evidence="1">DNA-dependent RNA polymerase catalyzes the transcription of DNA into RNA using the four ribonucleoside triphosphates as substrates.</text>
</comment>
<comment type="catalytic activity">
    <reaction evidence="1">
        <text>RNA(n) + a ribonucleoside 5'-triphosphate = RNA(n+1) + diphosphate</text>
        <dbReference type="Rhea" id="RHEA:21248"/>
        <dbReference type="Rhea" id="RHEA-COMP:14527"/>
        <dbReference type="Rhea" id="RHEA-COMP:17342"/>
        <dbReference type="ChEBI" id="CHEBI:33019"/>
        <dbReference type="ChEBI" id="CHEBI:61557"/>
        <dbReference type="ChEBI" id="CHEBI:140395"/>
        <dbReference type="EC" id="2.7.7.6"/>
    </reaction>
</comment>
<comment type="subunit">
    <text evidence="1">Homodimer. The RNAP catalytic core consists of 2 alpha, 1 beta, 1 beta' and 1 omega subunit. When a sigma factor is associated with the core the holoenzyme is formed, which can initiate transcription.</text>
</comment>
<comment type="domain">
    <text evidence="1">The N-terminal domain is essential for RNAP assembly and basal transcription, whereas the C-terminal domain is involved in interaction with transcriptional regulators and with upstream promoter elements.</text>
</comment>
<comment type="similarity">
    <text evidence="1">Belongs to the RNA polymerase alpha chain family.</text>
</comment>
<name>RPOA_ALKOO</name>